<organism>
    <name type="scientific">Bacillus cereus (strain ATCC 10987 / NRS 248)</name>
    <dbReference type="NCBI Taxonomy" id="222523"/>
    <lineage>
        <taxon>Bacteria</taxon>
        <taxon>Bacillati</taxon>
        <taxon>Bacillota</taxon>
        <taxon>Bacilli</taxon>
        <taxon>Bacillales</taxon>
        <taxon>Bacillaceae</taxon>
        <taxon>Bacillus</taxon>
        <taxon>Bacillus cereus group</taxon>
    </lineage>
</organism>
<gene>
    <name evidence="1" type="primary">rsbW</name>
    <name type="ordered locus">BCE_1085</name>
</gene>
<name>RSBW_BACC1</name>
<proteinExistence type="inferred from homology"/>
<feature type="chain" id="PRO_0000203526" description="Serine-protein kinase RsbW">
    <location>
        <begin position="1"/>
        <end position="160"/>
    </location>
</feature>
<evidence type="ECO:0000255" key="1">
    <source>
        <dbReference type="HAMAP-Rule" id="MF_00638"/>
    </source>
</evidence>
<dbReference type="EC" id="2.7.11.1" evidence="1"/>
<dbReference type="EMBL" id="AE017194">
    <property type="protein sequence ID" value="AAS40016.1"/>
    <property type="molecule type" value="Genomic_DNA"/>
</dbReference>
<dbReference type="SMR" id="Q73CI0"/>
<dbReference type="KEGG" id="bca:BCE_1085"/>
<dbReference type="HOGENOM" id="CLU_090336_11_1_9"/>
<dbReference type="Proteomes" id="UP000002527">
    <property type="component" value="Chromosome"/>
</dbReference>
<dbReference type="GO" id="GO:0005524">
    <property type="term" value="F:ATP binding"/>
    <property type="evidence" value="ECO:0007669"/>
    <property type="project" value="UniProtKB-KW"/>
</dbReference>
<dbReference type="GO" id="GO:0106310">
    <property type="term" value="F:protein serine kinase activity"/>
    <property type="evidence" value="ECO:0007669"/>
    <property type="project" value="RHEA"/>
</dbReference>
<dbReference type="GO" id="GO:0004674">
    <property type="term" value="F:protein serine/threonine kinase activity"/>
    <property type="evidence" value="ECO:0007669"/>
    <property type="project" value="UniProtKB-KW"/>
</dbReference>
<dbReference type="GO" id="GO:0016989">
    <property type="term" value="F:sigma factor antagonist activity"/>
    <property type="evidence" value="ECO:0007669"/>
    <property type="project" value="InterPro"/>
</dbReference>
<dbReference type="CDD" id="cd16936">
    <property type="entry name" value="HATPase_RsbW-like"/>
    <property type="match status" value="1"/>
</dbReference>
<dbReference type="FunFam" id="3.30.565.10:FF:000026">
    <property type="entry name" value="Serine-protein kinase RsbW"/>
    <property type="match status" value="1"/>
</dbReference>
<dbReference type="Gene3D" id="3.30.565.10">
    <property type="entry name" value="Histidine kinase-like ATPase, C-terminal domain"/>
    <property type="match status" value="1"/>
</dbReference>
<dbReference type="HAMAP" id="MF_00638">
    <property type="entry name" value="Anti_sigma_B"/>
    <property type="match status" value="1"/>
</dbReference>
<dbReference type="InterPro" id="IPR050267">
    <property type="entry name" value="Anti-sigma-factor_SerPK"/>
</dbReference>
<dbReference type="InterPro" id="IPR036890">
    <property type="entry name" value="HATPase_C_sf"/>
</dbReference>
<dbReference type="InterPro" id="IPR010193">
    <property type="entry name" value="RsbW"/>
</dbReference>
<dbReference type="NCBIfam" id="NF003144">
    <property type="entry name" value="PRK04069.1"/>
    <property type="match status" value="1"/>
</dbReference>
<dbReference type="NCBIfam" id="TIGR01924">
    <property type="entry name" value="rsbW_low_gc"/>
    <property type="match status" value="1"/>
</dbReference>
<dbReference type="PANTHER" id="PTHR35526">
    <property type="entry name" value="ANTI-SIGMA-F FACTOR RSBW-RELATED"/>
    <property type="match status" value="1"/>
</dbReference>
<dbReference type="PANTHER" id="PTHR35526:SF9">
    <property type="entry name" value="SERINE-PROTEIN KINASE RSBW"/>
    <property type="match status" value="1"/>
</dbReference>
<dbReference type="Pfam" id="PF13581">
    <property type="entry name" value="HATPase_c_2"/>
    <property type="match status" value="1"/>
</dbReference>
<dbReference type="SUPFAM" id="SSF55874">
    <property type="entry name" value="ATPase domain of HSP90 chaperone/DNA topoisomerase II/histidine kinase"/>
    <property type="match status" value="1"/>
</dbReference>
<protein>
    <recommendedName>
        <fullName evidence="1">Serine-protein kinase RsbW</fullName>
        <ecNumber evidence="1">2.7.11.1</ecNumber>
    </recommendedName>
    <alternativeName>
        <fullName evidence="1">Anti-sigma-B factor</fullName>
    </alternativeName>
    <alternativeName>
        <fullName evidence="1">Sigma-B negative effector RsbW</fullName>
    </alternativeName>
</protein>
<reference key="1">
    <citation type="journal article" date="2004" name="Nucleic Acids Res.">
        <title>The genome sequence of Bacillus cereus ATCC 10987 reveals metabolic adaptations and a large plasmid related to Bacillus anthracis pXO1.</title>
        <authorList>
            <person name="Rasko D.A."/>
            <person name="Ravel J."/>
            <person name="Oekstad O.A."/>
            <person name="Helgason E."/>
            <person name="Cer R.Z."/>
            <person name="Jiang L."/>
            <person name="Shores K.A."/>
            <person name="Fouts D.E."/>
            <person name="Tourasse N.J."/>
            <person name="Angiuoli S.V."/>
            <person name="Kolonay J.F."/>
            <person name="Nelson W.C."/>
            <person name="Kolstoe A.-B."/>
            <person name="Fraser C.M."/>
            <person name="Read T.D."/>
        </authorList>
    </citation>
    <scope>NUCLEOTIDE SEQUENCE [LARGE SCALE GENOMIC DNA]</scope>
    <source>
        <strain>ATCC 10987 / NRS 248</strain>
    </source>
</reference>
<comment type="function">
    <text evidence="1">Negative regulator of sigma-B activity. Phosphorylates and inactivates its specific antagonist protein, RsbV. Upon phosphorylation of RsbV, RsbW is released and binds to sigma-B, thereby blocking its ability to form an RNA polymerase holoenzyme (E-sigma-B).</text>
</comment>
<comment type="catalytic activity">
    <reaction evidence="1">
        <text>L-seryl-[protein] + ATP = O-phospho-L-seryl-[protein] + ADP + H(+)</text>
        <dbReference type="Rhea" id="RHEA:17989"/>
        <dbReference type="Rhea" id="RHEA-COMP:9863"/>
        <dbReference type="Rhea" id="RHEA-COMP:11604"/>
        <dbReference type="ChEBI" id="CHEBI:15378"/>
        <dbReference type="ChEBI" id="CHEBI:29999"/>
        <dbReference type="ChEBI" id="CHEBI:30616"/>
        <dbReference type="ChEBI" id="CHEBI:83421"/>
        <dbReference type="ChEBI" id="CHEBI:456216"/>
        <dbReference type="EC" id="2.7.11.1"/>
    </reaction>
</comment>
<comment type="catalytic activity">
    <reaction evidence="1">
        <text>L-threonyl-[protein] + ATP = O-phospho-L-threonyl-[protein] + ADP + H(+)</text>
        <dbReference type="Rhea" id="RHEA:46608"/>
        <dbReference type="Rhea" id="RHEA-COMP:11060"/>
        <dbReference type="Rhea" id="RHEA-COMP:11605"/>
        <dbReference type="ChEBI" id="CHEBI:15378"/>
        <dbReference type="ChEBI" id="CHEBI:30013"/>
        <dbReference type="ChEBI" id="CHEBI:30616"/>
        <dbReference type="ChEBI" id="CHEBI:61977"/>
        <dbReference type="ChEBI" id="CHEBI:456216"/>
        <dbReference type="EC" id="2.7.11.1"/>
    </reaction>
</comment>
<comment type="similarity">
    <text evidence="1">Belongs to the anti-sigma-factor family.</text>
</comment>
<accession>Q73CI0</accession>
<keyword id="KW-0067">ATP-binding</keyword>
<keyword id="KW-0418">Kinase</keyword>
<keyword id="KW-0547">Nucleotide-binding</keyword>
<keyword id="KW-0723">Serine/threonine-protein kinase</keyword>
<keyword id="KW-0808">Transferase</keyword>
<sequence>MMERFEKIEMKIPAKAEYVAIIRLTMAGVANRMGFAYDDIEDMKIAISEACTNIVQHAYKEDVGEITIVFGLYEDRLEIMVADNGVSFDFNNLKRKVGPYDINKPVEHLPENGLGLYLINTLMDDIQIMHDEGMTVLMTKYIQREQVENDGNPISTYNSY</sequence>